<sequence length="155" mass="17946">MAKSKPKDNALAQNRKARHDYNILETYEAGIALTGTEIKSVRASRINLKDGFAQVKNGEVWLMNVHISLYDQGNIFNHDPLRNRKLLLHKKEIKHLSEETQKKGITIVPLKVYIKNGFAKVLIGIAQGKHVYDKRETIKRRDQEREIRRTLKNYG</sequence>
<gene>
    <name evidence="1" type="primary">smpB</name>
    <name type="ordered locus">LSL_1155</name>
</gene>
<organism>
    <name type="scientific">Ligilactobacillus salivarius (strain UCC118)</name>
    <name type="common">Lactobacillus salivarius</name>
    <dbReference type="NCBI Taxonomy" id="362948"/>
    <lineage>
        <taxon>Bacteria</taxon>
        <taxon>Bacillati</taxon>
        <taxon>Bacillota</taxon>
        <taxon>Bacilli</taxon>
        <taxon>Lactobacillales</taxon>
        <taxon>Lactobacillaceae</taxon>
        <taxon>Ligilactobacillus</taxon>
    </lineage>
</organism>
<protein>
    <recommendedName>
        <fullName evidence="1">SsrA-binding protein</fullName>
    </recommendedName>
    <alternativeName>
        <fullName evidence="1">Small protein B</fullName>
    </alternativeName>
</protein>
<accession>Q1WSY8</accession>
<dbReference type="EMBL" id="CP000233">
    <property type="protein sequence ID" value="ABD99963.1"/>
    <property type="molecule type" value="Genomic_DNA"/>
</dbReference>
<dbReference type="RefSeq" id="WP_003700605.1">
    <property type="nucleotide sequence ID" value="NC_007929.1"/>
</dbReference>
<dbReference type="RefSeq" id="YP_536046.1">
    <property type="nucleotide sequence ID" value="NC_007929.1"/>
</dbReference>
<dbReference type="SMR" id="Q1WSY8"/>
<dbReference type="STRING" id="362948.LSL_1155"/>
<dbReference type="GeneID" id="89465901"/>
<dbReference type="KEGG" id="lsl:LSL_1155"/>
<dbReference type="PATRIC" id="fig|362948.14.peg.1229"/>
<dbReference type="HOGENOM" id="CLU_108953_0_0_9"/>
<dbReference type="OrthoDB" id="9805462at2"/>
<dbReference type="Proteomes" id="UP000006559">
    <property type="component" value="Chromosome"/>
</dbReference>
<dbReference type="GO" id="GO:0005829">
    <property type="term" value="C:cytosol"/>
    <property type="evidence" value="ECO:0007669"/>
    <property type="project" value="TreeGrafter"/>
</dbReference>
<dbReference type="GO" id="GO:0003723">
    <property type="term" value="F:RNA binding"/>
    <property type="evidence" value="ECO:0007669"/>
    <property type="project" value="UniProtKB-UniRule"/>
</dbReference>
<dbReference type="GO" id="GO:0070929">
    <property type="term" value="P:trans-translation"/>
    <property type="evidence" value="ECO:0007669"/>
    <property type="project" value="UniProtKB-UniRule"/>
</dbReference>
<dbReference type="CDD" id="cd09294">
    <property type="entry name" value="SmpB"/>
    <property type="match status" value="1"/>
</dbReference>
<dbReference type="Gene3D" id="2.40.280.10">
    <property type="match status" value="1"/>
</dbReference>
<dbReference type="HAMAP" id="MF_00023">
    <property type="entry name" value="SmpB"/>
    <property type="match status" value="1"/>
</dbReference>
<dbReference type="InterPro" id="IPR023620">
    <property type="entry name" value="SmpB"/>
</dbReference>
<dbReference type="InterPro" id="IPR000037">
    <property type="entry name" value="SsrA-bd_prot"/>
</dbReference>
<dbReference type="InterPro" id="IPR020081">
    <property type="entry name" value="SsrA-bd_prot_CS"/>
</dbReference>
<dbReference type="NCBIfam" id="NF003843">
    <property type="entry name" value="PRK05422.1"/>
    <property type="match status" value="1"/>
</dbReference>
<dbReference type="NCBIfam" id="TIGR00086">
    <property type="entry name" value="smpB"/>
    <property type="match status" value="1"/>
</dbReference>
<dbReference type="PANTHER" id="PTHR30308:SF2">
    <property type="entry name" value="SSRA-BINDING PROTEIN"/>
    <property type="match status" value="1"/>
</dbReference>
<dbReference type="PANTHER" id="PTHR30308">
    <property type="entry name" value="TMRNA-BINDING COMPONENT OF TRANS-TRANSLATION TAGGING COMPLEX"/>
    <property type="match status" value="1"/>
</dbReference>
<dbReference type="Pfam" id="PF01668">
    <property type="entry name" value="SmpB"/>
    <property type="match status" value="1"/>
</dbReference>
<dbReference type="SUPFAM" id="SSF74982">
    <property type="entry name" value="Small protein B (SmpB)"/>
    <property type="match status" value="1"/>
</dbReference>
<dbReference type="PROSITE" id="PS01317">
    <property type="entry name" value="SSRP"/>
    <property type="match status" value="1"/>
</dbReference>
<name>SSRP_LIGS1</name>
<comment type="function">
    <text evidence="1">Required for rescue of stalled ribosomes mediated by trans-translation. Binds to transfer-messenger RNA (tmRNA), required for stable association of tmRNA with ribosomes. tmRNA and SmpB together mimic tRNA shape, replacing the anticodon stem-loop with SmpB. tmRNA is encoded by the ssrA gene; the 2 termini fold to resemble tRNA(Ala) and it encodes a 'tag peptide', a short internal open reading frame. During trans-translation Ala-aminoacylated tmRNA acts like a tRNA, entering the A-site of stalled ribosomes, displacing the stalled mRNA. The ribosome then switches to translate the ORF on the tmRNA; the nascent peptide is terminated with the 'tag peptide' encoded by the tmRNA and targeted for degradation. The ribosome is freed to recommence translation, which seems to be the essential function of trans-translation.</text>
</comment>
<comment type="subcellular location">
    <subcellularLocation>
        <location evidence="1">Cytoplasm</location>
    </subcellularLocation>
    <text evidence="1">The tmRNA-SmpB complex associates with stalled 70S ribosomes.</text>
</comment>
<comment type="similarity">
    <text evidence="1">Belongs to the SmpB family.</text>
</comment>
<proteinExistence type="inferred from homology"/>
<feature type="chain" id="PRO_0000331059" description="SsrA-binding protein">
    <location>
        <begin position="1"/>
        <end position="155"/>
    </location>
</feature>
<reference key="1">
    <citation type="journal article" date="2006" name="Proc. Natl. Acad. Sci. U.S.A.">
        <title>Multireplicon genome architecture of Lactobacillus salivarius.</title>
        <authorList>
            <person name="Claesson M.J."/>
            <person name="Li Y."/>
            <person name="Leahy S."/>
            <person name="Canchaya C."/>
            <person name="van Pijkeren J.P."/>
            <person name="Cerdeno-Tarraga A.M."/>
            <person name="Parkhill J."/>
            <person name="Flynn S."/>
            <person name="O'Sullivan G.C."/>
            <person name="Collins J.K."/>
            <person name="Higgins D."/>
            <person name="Shanahan F."/>
            <person name="Fitzgerald G.F."/>
            <person name="van Sinderen D."/>
            <person name="O'Toole P.W."/>
        </authorList>
    </citation>
    <scope>NUCLEOTIDE SEQUENCE [LARGE SCALE GENOMIC DNA]</scope>
    <source>
        <strain>UCC118</strain>
    </source>
</reference>
<evidence type="ECO:0000255" key="1">
    <source>
        <dbReference type="HAMAP-Rule" id="MF_00023"/>
    </source>
</evidence>
<keyword id="KW-0963">Cytoplasm</keyword>
<keyword id="KW-1185">Reference proteome</keyword>
<keyword id="KW-0694">RNA-binding</keyword>